<feature type="chain" id="PRO_0000143607" description="Maturase K">
    <location>
        <begin position="1"/>
        <end position="515"/>
    </location>
</feature>
<comment type="function">
    <text evidence="1">Usually encoded in the trnK tRNA gene intron. Probably assists in splicing its own and other chloroplast group II introns.</text>
</comment>
<comment type="subcellular location">
    <subcellularLocation>
        <location>Plastid</location>
        <location>Chloroplast</location>
    </subcellularLocation>
</comment>
<comment type="similarity">
    <text evidence="1">Belongs to the intron maturase 2 family. MatK subfamily.</text>
</comment>
<name>MATK_PINCL</name>
<dbReference type="EMBL" id="AB161003">
    <property type="protein sequence ID" value="BAD32746.1"/>
    <property type="molecule type" value="Genomic_DNA"/>
</dbReference>
<dbReference type="GO" id="GO:0009507">
    <property type="term" value="C:chloroplast"/>
    <property type="evidence" value="ECO:0007669"/>
    <property type="project" value="UniProtKB-SubCell"/>
</dbReference>
<dbReference type="GO" id="GO:0003723">
    <property type="term" value="F:RNA binding"/>
    <property type="evidence" value="ECO:0007669"/>
    <property type="project" value="UniProtKB-KW"/>
</dbReference>
<dbReference type="GO" id="GO:0006397">
    <property type="term" value="P:mRNA processing"/>
    <property type="evidence" value="ECO:0007669"/>
    <property type="project" value="UniProtKB-KW"/>
</dbReference>
<dbReference type="GO" id="GO:0008380">
    <property type="term" value="P:RNA splicing"/>
    <property type="evidence" value="ECO:0007669"/>
    <property type="project" value="UniProtKB-UniRule"/>
</dbReference>
<dbReference type="GO" id="GO:0008033">
    <property type="term" value="P:tRNA processing"/>
    <property type="evidence" value="ECO:0007669"/>
    <property type="project" value="UniProtKB-KW"/>
</dbReference>
<dbReference type="HAMAP" id="MF_01390">
    <property type="entry name" value="MatK"/>
    <property type="match status" value="1"/>
</dbReference>
<dbReference type="InterPro" id="IPR024937">
    <property type="entry name" value="Domain_X"/>
</dbReference>
<dbReference type="InterPro" id="IPR002866">
    <property type="entry name" value="Maturase_MatK"/>
</dbReference>
<dbReference type="InterPro" id="IPR024942">
    <property type="entry name" value="Maturase_MatK_N"/>
</dbReference>
<dbReference type="PANTHER" id="PTHR34811">
    <property type="entry name" value="MATURASE K"/>
    <property type="match status" value="1"/>
</dbReference>
<dbReference type="PANTHER" id="PTHR34811:SF1">
    <property type="entry name" value="MATURASE K"/>
    <property type="match status" value="1"/>
</dbReference>
<dbReference type="Pfam" id="PF01348">
    <property type="entry name" value="Intron_maturas2"/>
    <property type="match status" value="1"/>
</dbReference>
<dbReference type="Pfam" id="PF01824">
    <property type="entry name" value="MatK_N"/>
    <property type="match status" value="1"/>
</dbReference>
<organism>
    <name type="scientific">Pinus clausa</name>
    <name type="common">Sand pine</name>
    <name type="synonym">Pinus inops var. clausa</name>
    <dbReference type="NCBI Taxonomy" id="261911"/>
    <lineage>
        <taxon>Eukaryota</taxon>
        <taxon>Viridiplantae</taxon>
        <taxon>Streptophyta</taxon>
        <taxon>Embryophyta</taxon>
        <taxon>Tracheophyta</taxon>
        <taxon>Spermatophyta</taxon>
        <taxon>Pinopsida</taxon>
        <taxon>Pinidae</taxon>
        <taxon>Conifers I</taxon>
        <taxon>Pinales</taxon>
        <taxon>Pinaceae</taxon>
        <taxon>Pinus</taxon>
        <taxon>Pinus subgen. Pinus</taxon>
    </lineage>
</organism>
<gene>
    <name evidence="1" type="primary">matK</name>
</gene>
<proteinExistence type="inferred from homology"/>
<keyword id="KW-0150">Chloroplast</keyword>
<keyword id="KW-0507">mRNA processing</keyword>
<keyword id="KW-0934">Plastid</keyword>
<keyword id="KW-0694">RNA-binding</keyword>
<keyword id="KW-0819">tRNA processing</keyword>
<accession>Q6BDI8</accession>
<geneLocation type="chloroplast"/>
<reference key="1">
    <citation type="submission" date="2004-01" db="EMBL/GenBank/DDBJ databases">
        <title>Phylogeny and classification of Pinus.</title>
        <authorList>
            <person name="Gernandt D."/>
            <person name="Geada-Lopez G."/>
            <person name="Liston A."/>
        </authorList>
    </citation>
    <scope>NUCLEOTIDE SEQUENCE [GENOMIC DNA]</scope>
    <source>
        <tissue>Leaf</tissue>
    </source>
</reference>
<evidence type="ECO:0000255" key="1">
    <source>
        <dbReference type="HAMAP-Rule" id="MF_01390"/>
    </source>
</evidence>
<protein>
    <recommendedName>
        <fullName evidence="1">Maturase K</fullName>
    </recommendedName>
    <alternativeName>
        <fullName evidence="1">Intron maturase</fullName>
    </alternativeName>
</protein>
<sequence length="515" mass="61003">MDEFHRCGKEDSFWQQCFLYPLFFKEDLYAISHDHYLDVSSSSRPMEHLSSNDQLSFLTVKRLIGQIRKQNHSIVLFVNCDPNPLADRKKSFYSESVLEALTLVLEVPFSIWSKYSVEGMNESKSFRSIHSIFPFLEDKFPHSNSILDARIPYSIHPEILVRTFRRWIRDAPSLHPLRSVLYEYRNSTENLQRSIIVVPRVNTRFFLFLWNYYVCECESILFSRLKRSSHSRSLSHGSFPQRTHFHRKIKHIIIFSRRNSLKSIWSLKDPKIHYVRYGERPIIAIKGAHLLVKKCRYYLLIFRQFYFHLWSEPYRVCSHQLSKNCSSSPGYFLRVRMNPILVRTKMLDELFIADLITDEIDPIVPIVPIIGLLATEKFCDISGRPISKLSWTSLTDDDILDRFDQIWRNLFHYYSGSFDRDGLYRIKYILSLSCAKTLACKHKSTIRVVRKELGPELFKKSFSKEREFDSLRFSSKAAARSQRERIWHSDIPQINPLANSWQKIQDLKIENLFDQ</sequence>